<gene>
    <name type="primary">tbccd1</name>
    <name type="ORF">si:ch211-194d6.5</name>
    <name type="ORF">si:rp71-45g20.12</name>
    <name type="ORF">zgc:162789</name>
</gene>
<feature type="chain" id="PRO_0000304948" description="TBCC domain-containing protein 1">
    <location>
        <begin position="1"/>
        <end position="582"/>
    </location>
</feature>
<feature type="domain" description="C-CAP/cofactor C-like" evidence="2">
    <location>
        <begin position="305"/>
        <end position="451"/>
    </location>
</feature>
<feature type="region of interest" description="Disordered" evidence="3">
    <location>
        <begin position="140"/>
        <end position="159"/>
    </location>
</feature>
<feature type="region of interest" description="Disordered" evidence="3">
    <location>
        <begin position="547"/>
        <end position="582"/>
    </location>
</feature>
<feature type="compositionally biased region" description="Low complexity" evidence="3">
    <location>
        <begin position="140"/>
        <end position="153"/>
    </location>
</feature>
<feature type="compositionally biased region" description="Low complexity" evidence="3">
    <location>
        <begin position="547"/>
        <end position="558"/>
    </location>
</feature>
<feature type="compositionally biased region" description="Polar residues" evidence="3">
    <location>
        <begin position="559"/>
        <end position="582"/>
    </location>
</feature>
<feature type="sequence conflict" description="In Ref. 1; CAP19542." evidence="4" ref="1">
    <original>L</original>
    <variation>V</variation>
    <location>
        <position position="312"/>
    </location>
</feature>
<feature type="sequence conflict" description="In Ref. 2; AAI39634." evidence="4" ref="2">
    <original>I</original>
    <variation>R</variation>
    <location>
        <position position="390"/>
    </location>
</feature>
<feature type="sequence conflict" description="In Ref. 1; CAI11699." evidence="4" ref="1">
    <original>I</original>
    <variation>S</variation>
    <location>
        <position position="485"/>
    </location>
</feature>
<feature type="sequence conflict" description="In Ref. 2; AAI39634." evidence="4" ref="2">
    <original>Q</original>
    <variation>H</variation>
    <location>
        <position position="576"/>
    </location>
</feature>
<organism>
    <name type="scientific">Danio rerio</name>
    <name type="common">Zebrafish</name>
    <name type="synonym">Brachydanio rerio</name>
    <dbReference type="NCBI Taxonomy" id="7955"/>
    <lineage>
        <taxon>Eukaryota</taxon>
        <taxon>Metazoa</taxon>
        <taxon>Chordata</taxon>
        <taxon>Craniata</taxon>
        <taxon>Vertebrata</taxon>
        <taxon>Euteleostomi</taxon>
        <taxon>Actinopterygii</taxon>
        <taxon>Neopterygii</taxon>
        <taxon>Teleostei</taxon>
        <taxon>Ostariophysi</taxon>
        <taxon>Cypriniformes</taxon>
        <taxon>Danionidae</taxon>
        <taxon>Danioninae</taxon>
        <taxon>Danio</taxon>
    </lineage>
</organism>
<protein>
    <recommendedName>
        <fullName>TBCC domain-containing protein 1</fullName>
    </recommendedName>
</protein>
<name>TBCC1_DANRE</name>
<sequence length="582" mass="65778">MDKYTAYVWPRLEPFLVGVLPATPPSKFSMHYLRKMASYVRTRDGCFPRLGWQMWRHIACGKLQLAEDLAWLYFETFDLLMPRSAEQRLEWAEALSQCHTQKELDRQRCKLSVDTLQFLLFLYLQQLNRISLRTSLIGEEWPSPRSRSPSSSSSERDAKISSQNKNWDVQAHLTFIQTHLPELLELLVEPGQLSSSGQVLRDSHLTSEAVESLSLLLEGSVSHSRTVHPVHKLLSRSQLQSQAGFSKLSCSYSLQQFQDFLRQALCLNPFGISNCSQSGKKLSWALQVEGTLKKAKIFRNTHAAPPGSRLVLMSQVCKQTLAKDSEKLNDVNIKLHRCSEAFIYLLSPLWSVTLDKCRNSTLVLGPVRTSVHIQSCENVRVVCVAGRLTIGGSFNCTIHSLTPTRPLLLPGNASLTLGPFHTQYPTLEDHMASAGLAVVPNLWNQPLLFGVEGSAPDTGCYRIQPPSEFYPLVIPFQMDGDNCEIPCSLPEDFQKALESREKTIEEWQKTVKDAHLNKAQRRQFQALVEQKFHEWLLETGQRQELDSLLPPTITPSSSAEHWSSNQNTLKEQTHEQPTGTVC</sequence>
<reference key="1">
    <citation type="journal article" date="2013" name="Nature">
        <title>The zebrafish reference genome sequence and its relationship to the human genome.</title>
        <authorList>
            <person name="Howe K."/>
            <person name="Clark M.D."/>
            <person name="Torroja C.F."/>
            <person name="Torrance J."/>
            <person name="Berthelot C."/>
            <person name="Muffato M."/>
            <person name="Collins J.E."/>
            <person name="Humphray S."/>
            <person name="McLaren K."/>
            <person name="Matthews L."/>
            <person name="McLaren S."/>
            <person name="Sealy I."/>
            <person name="Caccamo M."/>
            <person name="Churcher C."/>
            <person name="Scott C."/>
            <person name="Barrett J.C."/>
            <person name="Koch R."/>
            <person name="Rauch G.J."/>
            <person name="White S."/>
            <person name="Chow W."/>
            <person name="Kilian B."/>
            <person name="Quintais L.T."/>
            <person name="Guerra-Assuncao J.A."/>
            <person name="Zhou Y."/>
            <person name="Gu Y."/>
            <person name="Yen J."/>
            <person name="Vogel J.H."/>
            <person name="Eyre T."/>
            <person name="Redmond S."/>
            <person name="Banerjee R."/>
            <person name="Chi J."/>
            <person name="Fu B."/>
            <person name="Langley E."/>
            <person name="Maguire S.F."/>
            <person name="Laird G.K."/>
            <person name="Lloyd D."/>
            <person name="Kenyon E."/>
            <person name="Donaldson S."/>
            <person name="Sehra H."/>
            <person name="Almeida-King J."/>
            <person name="Loveland J."/>
            <person name="Trevanion S."/>
            <person name="Jones M."/>
            <person name="Quail M."/>
            <person name="Willey D."/>
            <person name="Hunt A."/>
            <person name="Burton J."/>
            <person name="Sims S."/>
            <person name="McLay K."/>
            <person name="Plumb B."/>
            <person name="Davis J."/>
            <person name="Clee C."/>
            <person name="Oliver K."/>
            <person name="Clark R."/>
            <person name="Riddle C."/>
            <person name="Elliot D."/>
            <person name="Threadgold G."/>
            <person name="Harden G."/>
            <person name="Ware D."/>
            <person name="Begum S."/>
            <person name="Mortimore B."/>
            <person name="Kerry G."/>
            <person name="Heath P."/>
            <person name="Phillimore B."/>
            <person name="Tracey A."/>
            <person name="Corby N."/>
            <person name="Dunn M."/>
            <person name="Johnson C."/>
            <person name="Wood J."/>
            <person name="Clark S."/>
            <person name="Pelan S."/>
            <person name="Griffiths G."/>
            <person name="Smith M."/>
            <person name="Glithero R."/>
            <person name="Howden P."/>
            <person name="Barker N."/>
            <person name="Lloyd C."/>
            <person name="Stevens C."/>
            <person name="Harley J."/>
            <person name="Holt K."/>
            <person name="Panagiotidis G."/>
            <person name="Lovell J."/>
            <person name="Beasley H."/>
            <person name="Henderson C."/>
            <person name="Gordon D."/>
            <person name="Auger K."/>
            <person name="Wright D."/>
            <person name="Collins J."/>
            <person name="Raisen C."/>
            <person name="Dyer L."/>
            <person name="Leung K."/>
            <person name="Robertson L."/>
            <person name="Ambridge K."/>
            <person name="Leongamornlert D."/>
            <person name="McGuire S."/>
            <person name="Gilderthorp R."/>
            <person name="Griffiths C."/>
            <person name="Manthravadi D."/>
            <person name="Nichol S."/>
            <person name="Barker G."/>
            <person name="Whitehead S."/>
            <person name="Kay M."/>
            <person name="Brown J."/>
            <person name="Murnane C."/>
            <person name="Gray E."/>
            <person name="Humphries M."/>
            <person name="Sycamore N."/>
            <person name="Barker D."/>
            <person name="Saunders D."/>
            <person name="Wallis J."/>
            <person name="Babbage A."/>
            <person name="Hammond S."/>
            <person name="Mashreghi-Mohammadi M."/>
            <person name="Barr L."/>
            <person name="Martin S."/>
            <person name="Wray P."/>
            <person name="Ellington A."/>
            <person name="Matthews N."/>
            <person name="Ellwood M."/>
            <person name="Woodmansey R."/>
            <person name="Clark G."/>
            <person name="Cooper J."/>
            <person name="Tromans A."/>
            <person name="Grafham D."/>
            <person name="Skuce C."/>
            <person name="Pandian R."/>
            <person name="Andrews R."/>
            <person name="Harrison E."/>
            <person name="Kimberley A."/>
            <person name="Garnett J."/>
            <person name="Fosker N."/>
            <person name="Hall R."/>
            <person name="Garner P."/>
            <person name="Kelly D."/>
            <person name="Bird C."/>
            <person name="Palmer S."/>
            <person name="Gehring I."/>
            <person name="Berger A."/>
            <person name="Dooley C.M."/>
            <person name="Ersan-Urun Z."/>
            <person name="Eser C."/>
            <person name="Geiger H."/>
            <person name="Geisler M."/>
            <person name="Karotki L."/>
            <person name="Kirn A."/>
            <person name="Konantz J."/>
            <person name="Konantz M."/>
            <person name="Oberlander M."/>
            <person name="Rudolph-Geiger S."/>
            <person name="Teucke M."/>
            <person name="Lanz C."/>
            <person name="Raddatz G."/>
            <person name="Osoegawa K."/>
            <person name="Zhu B."/>
            <person name="Rapp A."/>
            <person name="Widaa S."/>
            <person name="Langford C."/>
            <person name="Yang F."/>
            <person name="Schuster S.C."/>
            <person name="Carter N.P."/>
            <person name="Harrow J."/>
            <person name="Ning Z."/>
            <person name="Herrero J."/>
            <person name="Searle S.M."/>
            <person name="Enright A."/>
            <person name="Geisler R."/>
            <person name="Plasterk R.H."/>
            <person name="Lee C."/>
            <person name="Westerfield M."/>
            <person name="de Jong P.J."/>
            <person name="Zon L.I."/>
            <person name="Postlethwait J.H."/>
            <person name="Nusslein-Volhard C."/>
            <person name="Hubbard T.J."/>
            <person name="Roest Crollius H."/>
            <person name="Rogers J."/>
            <person name="Stemple D.L."/>
        </authorList>
    </citation>
    <scope>NUCLEOTIDE SEQUENCE [LARGE SCALE GENOMIC DNA]</scope>
    <source>
        <strain>Tuebingen</strain>
    </source>
</reference>
<reference key="2">
    <citation type="submission" date="2007-04" db="EMBL/GenBank/DDBJ databases">
        <authorList>
            <consortium name="NIH - Zebrafish Gene Collection (ZGC) project"/>
        </authorList>
    </citation>
    <scope>NUCLEOTIDE SEQUENCE [LARGE SCALE MRNA]</scope>
    <source>
        <tissue>Embryo</tissue>
    </source>
</reference>
<comment type="function">
    <text evidence="1">May play a role in the regulation of centrosome and Golgi apparatus positioning.</text>
</comment>
<comment type="subcellular location">
    <subcellularLocation>
        <location evidence="1">Cytoplasm</location>
        <location evidence="1">Cytoskeleton</location>
        <location evidence="1">Microtubule organizing center</location>
        <location evidence="1">Centrosome</location>
    </subcellularLocation>
    <subcellularLocation>
        <location evidence="1">Cytoplasm</location>
        <location evidence="1">Cytoskeleton</location>
        <location evidence="1">Spindle pole</location>
    </subcellularLocation>
</comment>
<comment type="similarity">
    <text evidence="4">Belongs to the TBCC family.</text>
</comment>
<accession>A4QP31</accession>
<accession>A8WHY2</accession>
<accession>Q5SQE5</accession>
<dbReference type="EMBL" id="AL772198">
    <property type="protein sequence ID" value="CAI11699.2"/>
    <property type="molecule type" value="Genomic_DNA"/>
</dbReference>
<dbReference type="EMBL" id="BX511265">
    <property type="protein sequence ID" value="CAP19542.1"/>
    <property type="molecule type" value="Genomic_DNA"/>
</dbReference>
<dbReference type="EMBL" id="BC139633">
    <property type="protein sequence ID" value="AAI39634.1"/>
    <property type="molecule type" value="mRNA"/>
</dbReference>
<dbReference type="RefSeq" id="NP_001038617.2">
    <property type="nucleotide sequence ID" value="NM_001045152.2"/>
</dbReference>
<dbReference type="SMR" id="A4QP31"/>
<dbReference type="FunCoup" id="A4QP31">
    <property type="interactions" value="804"/>
</dbReference>
<dbReference type="STRING" id="7955.ENSDARP00000064155"/>
<dbReference type="PaxDb" id="7955-ENSDARP00000064155"/>
<dbReference type="PeptideAtlas" id="A4QP31"/>
<dbReference type="AGR" id="ZFIN:ZDB-GENE-041210-222"/>
<dbReference type="ZFIN" id="ZDB-GENE-041210-222">
    <property type="gene designation" value="tbccd1"/>
</dbReference>
<dbReference type="eggNOG" id="KOG4416">
    <property type="taxonomic scope" value="Eukaryota"/>
</dbReference>
<dbReference type="InParanoid" id="A4QP31"/>
<dbReference type="OrthoDB" id="427777at2759"/>
<dbReference type="PhylomeDB" id="A4QP31"/>
<dbReference type="TreeFam" id="TF329418"/>
<dbReference type="PRO" id="PR:A4QP31"/>
<dbReference type="Proteomes" id="UP000000437">
    <property type="component" value="Alternate scaffold 9"/>
</dbReference>
<dbReference type="Proteomes" id="UP000000437">
    <property type="component" value="Chromosome 9"/>
</dbReference>
<dbReference type="GO" id="GO:0005737">
    <property type="term" value="C:cytoplasm"/>
    <property type="evidence" value="ECO:0007669"/>
    <property type="project" value="UniProtKB-KW"/>
</dbReference>
<dbReference type="GO" id="GO:0031616">
    <property type="term" value="C:spindle pole centrosome"/>
    <property type="evidence" value="ECO:0000318"/>
    <property type="project" value="GO_Central"/>
</dbReference>
<dbReference type="GO" id="GO:0051661">
    <property type="term" value="P:maintenance of centrosome location"/>
    <property type="evidence" value="ECO:0000318"/>
    <property type="project" value="GO_Central"/>
</dbReference>
<dbReference type="GO" id="GO:0051684">
    <property type="term" value="P:maintenance of Golgi location"/>
    <property type="evidence" value="ECO:0000318"/>
    <property type="project" value="GO_Central"/>
</dbReference>
<dbReference type="Gene3D" id="2.160.20.70">
    <property type="match status" value="1"/>
</dbReference>
<dbReference type="InterPro" id="IPR017901">
    <property type="entry name" value="C-CAP_CF_C-like"/>
</dbReference>
<dbReference type="InterPro" id="IPR016098">
    <property type="entry name" value="CAP/MinC_C"/>
</dbReference>
<dbReference type="InterPro" id="IPR006599">
    <property type="entry name" value="CARP_motif"/>
</dbReference>
<dbReference type="InterPro" id="IPR039589">
    <property type="entry name" value="TBCC1"/>
</dbReference>
<dbReference type="InterPro" id="IPR012945">
    <property type="entry name" value="Tubulin-bd_cofactor_C_dom"/>
</dbReference>
<dbReference type="PANTHER" id="PTHR16052">
    <property type="entry name" value="TBCC DOMAIN-CONTAINING PROTEIN 1"/>
    <property type="match status" value="1"/>
</dbReference>
<dbReference type="PANTHER" id="PTHR16052:SF0">
    <property type="entry name" value="TBCC DOMAIN-CONTAINING PROTEIN 1"/>
    <property type="match status" value="1"/>
</dbReference>
<dbReference type="Pfam" id="PF07986">
    <property type="entry name" value="TBCC"/>
    <property type="match status" value="1"/>
</dbReference>
<dbReference type="SMART" id="SM00673">
    <property type="entry name" value="CARP"/>
    <property type="match status" value="1"/>
</dbReference>
<dbReference type="PROSITE" id="PS51329">
    <property type="entry name" value="C_CAP_COFACTOR_C"/>
    <property type="match status" value="1"/>
</dbReference>
<evidence type="ECO:0000250" key="1"/>
<evidence type="ECO:0000255" key="2">
    <source>
        <dbReference type="PROSITE-ProRule" id="PRU00659"/>
    </source>
</evidence>
<evidence type="ECO:0000256" key="3">
    <source>
        <dbReference type="SAM" id="MobiDB-lite"/>
    </source>
</evidence>
<evidence type="ECO:0000305" key="4"/>
<proteinExistence type="evidence at transcript level"/>
<keyword id="KW-0963">Cytoplasm</keyword>
<keyword id="KW-0206">Cytoskeleton</keyword>
<keyword id="KW-1185">Reference proteome</keyword>